<feature type="chain" id="PRO_0000165673" description="RuvB-like helicase 2">
    <location>
        <begin position="1"/>
        <end position="476"/>
    </location>
</feature>
<feature type="binding site" evidence="1">
    <location>
        <begin position="72"/>
        <end position="80"/>
    </location>
    <ligand>
        <name>ATP</name>
        <dbReference type="ChEBI" id="CHEBI:30616"/>
    </ligand>
</feature>
<organism>
    <name type="scientific">Mycosarcoma maydis</name>
    <name type="common">Corn smut fungus</name>
    <name type="synonym">Ustilago maydis</name>
    <dbReference type="NCBI Taxonomy" id="5270"/>
    <lineage>
        <taxon>Eukaryota</taxon>
        <taxon>Fungi</taxon>
        <taxon>Dikarya</taxon>
        <taxon>Basidiomycota</taxon>
        <taxon>Ustilaginomycotina</taxon>
        <taxon>Ustilaginomycetes</taxon>
        <taxon>Ustilaginales</taxon>
        <taxon>Ustilaginaceae</taxon>
        <taxon>Mycosarcoma</taxon>
    </lineage>
</organism>
<comment type="function">
    <text evidence="1">DNA helicase which participates in several chromatin remodeling complexes, including the SWR1 and the INO80 complexes. The SWR1 complex mediates the ATP-dependent exchange of histone H2A for the H2A variant HZT1 leading to transcriptional regulation of selected genes by chromatin remodeling. The INO80 complex remodels chromatin by shifting nucleosomes and is involved in DNA repair. Also involved in pre-rRNA processing (By similarity).</text>
</comment>
<comment type="catalytic activity">
    <reaction>
        <text>ATP + H2O = ADP + phosphate + H(+)</text>
        <dbReference type="Rhea" id="RHEA:13065"/>
        <dbReference type="ChEBI" id="CHEBI:15377"/>
        <dbReference type="ChEBI" id="CHEBI:15378"/>
        <dbReference type="ChEBI" id="CHEBI:30616"/>
        <dbReference type="ChEBI" id="CHEBI:43474"/>
        <dbReference type="ChEBI" id="CHEBI:456216"/>
        <dbReference type="EC" id="3.6.4.12"/>
    </reaction>
</comment>
<comment type="subunit">
    <text evidence="1">May form heterododecamers with RVB1. Component of the SWR1 chromatin remodeling complex, the INO80 chromatin remodeling complex, and of the R2TP complex (By similarity).</text>
</comment>
<comment type="subcellular location">
    <subcellularLocation>
        <location evidence="1">Nucleus</location>
    </subcellularLocation>
</comment>
<comment type="similarity">
    <text evidence="2">Belongs to the RuvB family.</text>
</comment>
<evidence type="ECO:0000250" key="1"/>
<evidence type="ECO:0000305" key="2"/>
<accession>Q4P6N7</accession>
<accession>A0A0D1CLW7</accession>
<dbReference type="EC" id="3.6.4.12"/>
<dbReference type="EMBL" id="CM003151">
    <property type="protein sequence ID" value="KIS67728.1"/>
    <property type="molecule type" value="Genomic_DNA"/>
</dbReference>
<dbReference type="RefSeq" id="XP_011390705.1">
    <property type="nucleotide sequence ID" value="XM_011392403.1"/>
</dbReference>
<dbReference type="SMR" id="Q4P6N7"/>
<dbReference type="FunCoup" id="Q4P6N7">
    <property type="interactions" value="614"/>
</dbReference>
<dbReference type="STRING" id="237631.Q4P6N7"/>
<dbReference type="EnsemblFungi" id="KIS67728">
    <property type="protein sequence ID" value="KIS67728"/>
    <property type="gene ID" value="UMAG_04226"/>
</dbReference>
<dbReference type="GeneID" id="23564476"/>
<dbReference type="KEGG" id="uma:UMAG_04226"/>
<dbReference type="VEuPathDB" id="FungiDB:UMAG_04226"/>
<dbReference type="eggNOG" id="KOG2680">
    <property type="taxonomic scope" value="Eukaryota"/>
</dbReference>
<dbReference type="HOGENOM" id="CLU_028311_4_0_1"/>
<dbReference type="InParanoid" id="Q4P6N7"/>
<dbReference type="OMA" id="IINTEPY"/>
<dbReference type="OrthoDB" id="10060499at2759"/>
<dbReference type="Proteomes" id="UP000000561">
    <property type="component" value="Chromosome 12"/>
</dbReference>
<dbReference type="GO" id="GO:0031011">
    <property type="term" value="C:Ino80 complex"/>
    <property type="evidence" value="ECO:0000318"/>
    <property type="project" value="GO_Central"/>
</dbReference>
<dbReference type="GO" id="GO:0035267">
    <property type="term" value="C:NuA4 histone acetyltransferase complex"/>
    <property type="evidence" value="ECO:0000318"/>
    <property type="project" value="GO_Central"/>
</dbReference>
<dbReference type="GO" id="GO:0097255">
    <property type="term" value="C:R2TP complex"/>
    <property type="evidence" value="ECO:0000318"/>
    <property type="project" value="GO_Central"/>
</dbReference>
<dbReference type="GO" id="GO:0000812">
    <property type="term" value="C:Swr1 complex"/>
    <property type="evidence" value="ECO:0000318"/>
    <property type="project" value="GO_Central"/>
</dbReference>
<dbReference type="GO" id="GO:0043138">
    <property type="term" value="F:3'-5' DNA helicase activity"/>
    <property type="evidence" value="ECO:0007669"/>
    <property type="project" value="EnsemblFungi"/>
</dbReference>
<dbReference type="GO" id="GO:0043139">
    <property type="term" value="F:5'-3' DNA helicase activity"/>
    <property type="evidence" value="ECO:0007669"/>
    <property type="project" value="EnsemblFungi"/>
</dbReference>
<dbReference type="GO" id="GO:0005524">
    <property type="term" value="F:ATP binding"/>
    <property type="evidence" value="ECO:0007669"/>
    <property type="project" value="UniProtKB-KW"/>
</dbReference>
<dbReference type="GO" id="GO:0016887">
    <property type="term" value="F:ATP hydrolysis activity"/>
    <property type="evidence" value="ECO:0007669"/>
    <property type="project" value="InterPro"/>
</dbReference>
<dbReference type="GO" id="GO:0003678">
    <property type="term" value="F:DNA helicase activity"/>
    <property type="evidence" value="ECO:0000318"/>
    <property type="project" value="GO_Central"/>
</dbReference>
<dbReference type="GO" id="GO:0000492">
    <property type="term" value="P:box C/D snoRNP assembly"/>
    <property type="evidence" value="ECO:0000318"/>
    <property type="project" value="GO_Central"/>
</dbReference>
<dbReference type="GO" id="GO:0006338">
    <property type="term" value="P:chromatin remodeling"/>
    <property type="evidence" value="ECO:0000318"/>
    <property type="project" value="GO_Central"/>
</dbReference>
<dbReference type="GO" id="GO:0006281">
    <property type="term" value="P:DNA repair"/>
    <property type="evidence" value="ECO:0007669"/>
    <property type="project" value="UniProtKB-KW"/>
</dbReference>
<dbReference type="GO" id="GO:0006357">
    <property type="term" value="P:regulation of transcription by RNA polymerase II"/>
    <property type="evidence" value="ECO:0000318"/>
    <property type="project" value="GO_Central"/>
</dbReference>
<dbReference type="GO" id="GO:0006364">
    <property type="term" value="P:rRNA processing"/>
    <property type="evidence" value="ECO:0007669"/>
    <property type="project" value="UniProtKB-KW"/>
</dbReference>
<dbReference type="FunFam" id="3.40.50.300:FF:002221">
    <property type="entry name" value="RuvB-like 2"/>
    <property type="match status" value="2"/>
</dbReference>
<dbReference type="FunFam" id="1.10.8.60:FF:000010">
    <property type="entry name" value="RuvB-like helicase"/>
    <property type="match status" value="1"/>
</dbReference>
<dbReference type="FunFam" id="2.40.50.360:FF:000002">
    <property type="entry name" value="RuvB-like helicase"/>
    <property type="match status" value="1"/>
</dbReference>
<dbReference type="Gene3D" id="1.10.8.60">
    <property type="match status" value="1"/>
</dbReference>
<dbReference type="Gene3D" id="3.40.50.300">
    <property type="entry name" value="P-loop containing nucleotide triphosphate hydrolases"/>
    <property type="match status" value="1"/>
</dbReference>
<dbReference type="Gene3D" id="2.40.50.360">
    <property type="entry name" value="RuvB-like helicase, domain II"/>
    <property type="match status" value="1"/>
</dbReference>
<dbReference type="InterPro" id="IPR003593">
    <property type="entry name" value="AAA+_ATPase"/>
</dbReference>
<dbReference type="InterPro" id="IPR027417">
    <property type="entry name" value="P-loop_NTPase"/>
</dbReference>
<dbReference type="InterPro" id="IPR027238">
    <property type="entry name" value="RuvB-like"/>
</dbReference>
<dbReference type="InterPro" id="IPR041048">
    <property type="entry name" value="RuvB-like_C"/>
</dbReference>
<dbReference type="InterPro" id="IPR042487">
    <property type="entry name" value="RuvBL1/2_DNA/RNA_bd_dom"/>
</dbReference>
<dbReference type="InterPro" id="IPR010339">
    <property type="entry name" value="TIP49_P-loop"/>
</dbReference>
<dbReference type="PANTHER" id="PTHR11093">
    <property type="entry name" value="RUVB-RELATED REPTIN AND PONTIN"/>
    <property type="match status" value="1"/>
</dbReference>
<dbReference type="Pfam" id="PF06068">
    <property type="entry name" value="TIP49"/>
    <property type="match status" value="1"/>
</dbReference>
<dbReference type="Pfam" id="PF17856">
    <property type="entry name" value="TIP49_C"/>
    <property type="match status" value="1"/>
</dbReference>
<dbReference type="SMART" id="SM00382">
    <property type="entry name" value="AAA"/>
    <property type="match status" value="1"/>
</dbReference>
<dbReference type="SUPFAM" id="SSF52540">
    <property type="entry name" value="P-loop containing nucleoside triphosphate hydrolases"/>
    <property type="match status" value="1"/>
</dbReference>
<name>RUVB2_MYCMD</name>
<proteinExistence type="inferred from homology"/>
<protein>
    <recommendedName>
        <fullName>RuvB-like helicase 2</fullName>
        <ecNumber>3.6.4.12</ecNumber>
    </recommendedName>
</protein>
<keyword id="KW-0010">Activator</keyword>
<keyword id="KW-0067">ATP-binding</keyword>
<keyword id="KW-0156">Chromatin regulator</keyword>
<keyword id="KW-0227">DNA damage</keyword>
<keyword id="KW-0234">DNA repair</keyword>
<keyword id="KW-0347">Helicase</keyword>
<keyword id="KW-0378">Hydrolase</keyword>
<keyword id="KW-0547">Nucleotide-binding</keyword>
<keyword id="KW-0539">Nucleus</keyword>
<keyword id="KW-1185">Reference proteome</keyword>
<keyword id="KW-0698">rRNA processing</keyword>
<keyword id="KW-0804">Transcription</keyword>
<keyword id="KW-0805">Transcription regulation</keyword>
<reference key="1">
    <citation type="journal article" date="2006" name="Nature">
        <title>Insights from the genome of the biotrophic fungal plant pathogen Ustilago maydis.</title>
        <authorList>
            <person name="Kaemper J."/>
            <person name="Kahmann R."/>
            <person name="Boelker M."/>
            <person name="Ma L.-J."/>
            <person name="Brefort T."/>
            <person name="Saville B.J."/>
            <person name="Banuett F."/>
            <person name="Kronstad J.W."/>
            <person name="Gold S.E."/>
            <person name="Mueller O."/>
            <person name="Perlin M.H."/>
            <person name="Woesten H.A.B."/>
            <person name="de Vries R."/>
            <person name="Ruiz-Herrera J."/>
            <person name="Reynaga-Pena C.G."/>
            <person name="Snetselaar K."/>
            <person name="McCann M."/>
            <person name="Perez-Martin J."/>
            <person name="Feldbruegge M."/>
            <person name="Basse C.W."/>
            <person name="Steinberg G."/>
            <person name="Ibeas J.I."/>
            <person name="Holloman W."/>
            <person name="Guzman P."/>
            <person name="Farman M.L."/>
            <person name="Stajich J.E."/>
            <person name="Sentandreu R."/>
            <person name="Gonzalez-Prieto J.M."/>
            <person name="Kennell J.C."/>
            <person name="Molina L."/>
            <person name="Schirawski J."/>
            <person name="Mendoza-Mendoza A."/>
            <person name="Greilinger D."/>
            <person name="Muench K."/>
            <person name="Roessel N."/>
            <person name="Scherer M."/>
            <person name="Vranes M."/>
            <person name="Ladendorf O."/>
            <person name="Vincon V."/>
            <person name="Fuchs U."/>
            <person name="Sandrock B."/>
            <person name="Meng S."/>
            <person name="Ho E.C.H."/>
            <person name="Cahill M.J."/>
            <person name="Boyce K.J."/>
            <person name="Klose J."/>
            <person name="Klosterman S.J."/>
            <person name="Deelstra H.J."/>
            <person name="Ortiz-Castellanos L."/>
            <person name="Li W."/>
            <person name="Sanchez-Alonso P."/>
            <person name="Schreier P.H."/>
            <person name="Haeuser-Hahn I."/>
            <person name="Vaupel M."/>
            <person name="Koopmann E."/>
            <person name="Friedrich G."/>
            <person name="Voss H."/>
            <person name="Schlueter T."/>
            <person name="Margolis J."/>
            <person name="Platt D."/>
            <person name="Swimmer C."/>
            <person name="Gnirke A."/>
            <person name="Chen F."/>
            <person name="Vysotskaia V."/>
            <person name="Mannhaupt G."/>
            <person name="Gueldener U."/>
            <person name="Muensterkoetter M."/>
            <person name="Haase D."/>
            <person name="Oesterheld M."/>
            <person name="Mewes H.-W."/>
            <person name="Mauceli E.W."/>
            <person name="DeCaprio D."/>
            <person name="Wade C.M."/>
            <person name="Butler J."/>
            <person name="Young S.K."/>
            <person name="Jaffe D.B."/>
            <person name="Calvo S.E."/>
            <person name="Nusbaum C."/>
            <person name="Galagan J.E."/>
            <person name="Birren B.W."/>
        </authorList>
    </citation>
    <scope>NUCLEOTIDE SEQUENCE [LARGE SCALE GENOMIC DNA]</scope>
    <source>
        <strain>DSM 14603 / FGSC 9021 / UM521</strain>
    </source>
</reference>
<reference key="2">
    <citation type="submission" date="2014-09" db="EMBL/GenBank/DDBJ databases">
        <authorList>
            <person name="Gueldener U."/>
            <person name="Muensterkoetter M."/>
            <person name="Walter M.C."/>
            <person name="Mannhaupt G."/>
            <person name="Kahmann R."/>
        </authorList>
    </citation>
    <scope>GENOME REANNOTATION</scope>
    <source>
        <strain>DSM 14603 / FGSC 9021 / UM521</strain>
    </source>
</reference>
<sequence>MAQISTTSEHTIQTLERIGAHSHVKGLGLDDQLEPRPSSQGMVGQRAARKAAGLIVKMVQDGRIAGRAILMVGPPSTGKTAIAMGMAQTLGSDVPFTMLSASEVFSLEMSKTEALMQAFRRSIGVRIREEAEVVEGEVVEIQIDRSLTGATKTGKLTIKTTDMETIYELGNKMIDSLQKEKVTAGDVIAIDKASGRITKLGRSFTRARDYDAMGSDTKFVQCPEGELQRRKDVVHTVSLHEIDVINSRTQGFLALFSGDTGEIKPELRDQINIKVGEWREEGKAEIVPGVLFIDEVHMLDIECFSFLNRALESELAPLVIMASNRGICRIRGTRFRSPHGIPIDLLDRVLIISTKPYELADLKQILTIRAAEEEVSLKPEALEVLTRMASETSLRYAINLITTANLAAKRRKADEVEVADVRRVYNLFVDEKRSVQYLKEHAEQFMNESDEYGDIDGLNSGAPIIGRQASAGAVQA</sequence>
<gene>
    <name type="primary">RVB2</name>
    <name type="ORF">UMAG_04226</name>
</gene>